<keyword id="KW-1003">Cell membrane</keyword>
<keyword id="KW-0449">Lipoprotein</keyword>
<keyword id="KW-0472">Membrane</keyword>
<keyword id="KW-0488">Methylation</keyword>
<keyword id="KW-0636">Prenylation</keyword>
<keyword id="KW-1185">Reference proteome</keyword>
<keyword id="KW-0807">Transducer</keyword>
<protein>
    <recommendedName>
        <fullName>Guanine nucleotide-binding protein subunit gamma</fullName>
    </recommendedName>
</protein>
<name>GBG_CAEBR</name>
<gene>
    <name type="primary">gpc-1</name>
    <name type="ORF">CBG00049</name>
</gene>
<comment type="function">
    <text>Guanine nucleotide-binding proteins (G proteins) are involved as a modulator or transducer in various transmembrane signaling systems. The beta and gamma chains are required for the GTPase activity, for replacement of GDP by GTP, and for G protein-effector interaction.</text>
</comment>
<comment type="subunit">
    <text evidence="2 3">G proteins are composed of 3 units, alpha, beta and gamma. Interacts with gpb-1 and gpb-2.</text>
</comment>
<comment type="subcellular location">
    <subcellularLocation>
        <location evidence="4">Cell membrane</location>
        <topology evidence="4">Lipid-anchor</topology>
        <orientation evidence="4">Cytoplasmic side</orientation>
    </subcellularLocation>
</comment>
<comment type="similarity">
    <text evidence="4">Belongs to the G protein gamma family.</text>
</comment>
<accession>Q4VT26</accession>
<accession>A8WM74</accession>
<accession>Q629E8</accession>
<sequence length="62" mass="7023">MENIKTTTEQLRTEANIQRKKVSEVAKDLVEFCEKNKATDMLVSGPLDAHNPFQEKKSCSVL</sequence>
<organism>
    <name type="scientific">Caenorhabditis briggsae</name>
    <dbReference type="NCBI Taxonomy" id="6238"/>
    <lineage>
        <taxon>Eukaryota</taxon>
        <taxon>Metazoa</taxon>
        <taxon>Ecdysozoa</taxon>
        <taxon>Nematoda</taxon>
        <taxon>Chromadorea</taxon>
        <taxon>Rhabditida</taxon>
        <taxon>Rhabditina</taxon>
        <taxon>Rhabditomorpha</taxon>
        <taxon>Rhabditoidea</taxon>
        <taxon>Rhabditidae</taxon>
        <taxon>Peloderinae</taxon>
        <taxon>Caenorhabditis</taxon>
    </lineage>
</organism>
<dbReference type="EMBL" id="AY634304">
    <property type="protein sequence ID" value="AAW02910.1"/>
    <property type="molecule type" value="Genomic_DNA"/>
</dbReference>
<dbReference type="EMBL" id="HE601409">
    <property type="protein sequence ID" value="CAP21578.2"/>
    <property type="molecule type" value="Genomic_DNA"/>
</dbReference>
<dbReference type="RefSeq" id="XP_002645200.1">
    <property type="nucleotide sequence ID" value="XM_002645154.1"/>
</dbReference>
<dbReference type="SMR" id="Q4VT26"/>
<dbReference type="FunCoup" id="Q4VT26">
    <property type="interactions" value="783"/>
</dbReference>
<dbReference type="STRING" id="6238.Q4VT26"/>
<dbReference type="EnsemblMetazoa" id="CBG00049.1">
    <property type="protein sequence ID" value="CBG00049.1"/>
    <property type="gene ID" value="WBGene00023553"/>
</dbReference>
<dbReference type="KEGG" id="cbr:CBG_00049"/>
<dbReference type="CTD" id="8587198"/>
<dbReference type="WormBase" id="CBG00049">
    <property type="protein sequence ID" value="CBP37073"/>
    <property type="gene ID" value="WBGene00023553"/>
    <property type="gene designation" value="Cbr-gpc-1"/>
</dbReference>
<dbReference type="eggNOG" id="KOG4119">
    <property type="taxonomic scope" value="Eukaryota"/>
</dbReference>
<dbReference type="HOGENOM" id="CLU_168377_3_1_1"/>
<dbReference type="InParanoid" id="Q4VT26"/>
<dbReference type="OMA" id="RYCSEHA"/>
<dbReference type="Proteomes" id="UP000008549">
    <property type="component" value="Unassembled WGS sequence"/>
</dbReference>
<dbReference type="GO" id="GO:0005834">
    <property type="term" value="C:heterotrimeric G-protein complex"/>
    <property type="evidence" value="ECO:0000318"/>
    <property type="project" value="GO_Central"/>
</dbReference>
<dbReference type="GO" id="GO:0031681">
    <property type="term" value="F:G-protein beta-subunit binding"/>
    <property type="evidence" value="ECO:0000318"/>
    <property type="project" value="GO_Central"/>
</dbReference>
<dbReference type="GO" id="GO:0007186">
    <property type="term" value="P:G protein-coupled receptor signaling pathway"/>
    <property type="evidence" value="ECO:0000318"/>
    <property type="project" value="GO_Central"/>
</dbReference>
<dbReference type="GO" id="GO:0050909">
    <property type="term" value="P:sensory perception of taste"/>
    <property type="evidence" value="ECO:0007669"/>
    <property type="project" value="EnsemblMetazoa"/>
</dbReference>
<dbReference type="CDD" id="cd00068">
    <property type="entry name" value="GGL"/>
    <property type="match status" value="1"/>
</dbReference>
<dbReference type="FunFam" id="4.10.260.10:FF:000001">
    <property type="entry name" value="Guanine nucleotide-binding protein subunit gamma"/>
    <property type="match status" value="1"/>
</dbReference>
<dbReference type="Gene3D" id="4.10.260.10">
    <property type="entry name" value="Transducin (heterotrimeric G protein), gamma chain"/>
    <property type="match status" value="1"/>
</dbReference>
<dbReference type="InterPro" id="IPR015898">
    <property type="entry name" value="G-protein_gamma-like_dom"/>
</dbReference>
<dbReference type="InterPro" id="IPR036284">
    <property type="entry name" value="GGL_sf"/>
</dbReference>
<dbReference type="InterPro" id="IPR001770">
    <property type="entry name" value="Gprotein-gamma"/>
</dbReference>
<dbReference type="PANTHER" id="PTHR13809">
    <property type="entry name" value="GUANINE NUCLEOTIDE-BINDING PROTEIN GAMMA SUBUNIT"/>
    <property type="match status" value="1"/>
</dbReference>
<dbReference type="Pfam" id="PF00631">
    <property type="entry name" value="G-gamma"/>
    <property type="match status" value="1"/>
</dbReference>
<dbReference type="PRINTS" id="PR00321">
    <property type="entry name" value="GPROTEING"/>
</dbReference>
<dbReference type="SMART" id="SM01224">
    <property type="entry name" value="G_gamma"/>
    <property type="match status" value="1"/>
</dbReference>
<dbReference type="SMART" id="SM00224">
    <property type="entry name" value="GGL"/>
    <property type="match status" value="1"/>
</dbReference>
<dbReference type="SUPFAM" id="SSF48670">
    <property type="entry name" value="Transducin (heterotrimeric G protein), gamma chain"/>
    <property type="match status" value="1"/>
</dbReference>
<dbReference type="PROSITE" id="PS50058">
    <property type="entry name" value="G_PROTEIN_GAMMA"/>
    <property type="match status" value="1"/>
</dbReference>
<reference key="1">
    <citation type="journal article" date="2005" name="Mol. Genet. Genomics">
        <title>Functional constraint and divergence in the G protein family in Caenorhabditis elegans and Caenorhabditis briggsae.</title>
        <authorList>
            <person name="Jovelin R."/>
            <person name="Phillips P.C."/>
        </authorList>
    </citation>
    <scope>NUCLEOTIDE SEQUENCE [GENOMIC DNA]</scope>
    <source>
        <strain>AF16</strain>
    </source>
</reference>
<reference key="2">
    <citation type="journal article" date="2003" name="PLoS Biol.">
        <title>The genome sequence of Caenorhabditis briggsae: a platform for comparative genomics.</title>
        <authorList>
            <person name="Stein L.D."/>
            <person name="Bao Z."/>
            <person name="Blasiar D."/>
            <person name="Blumenthal T."/>
            <person name="Brent M.R."/>
            <person name="Chen N."/>
            <person name="Chinwalla A."/>
            <person name="Clarke L."/>
            <person name="Clee C."/>
            <person name="Coghlan A."/>
            <person name="Coulson A."/>
            <person name="D'Eustachio P."/>
            <person name="Fitch D.H.A."/>
            <person name="Fulton L.A."/>
            <person name="Fulton R.E."/>
            <person name="Griffiths-Jones S."/>
            <person name="Harris T.W."/>
            <person name="Hillier L.W."/>
            <person name="Kamath R."/>
            <person name="Kuwabara P.E."/>
            <person name="Mardis E.R."/>
            <person name="Marra M.A."/>
            <person name="Miner T.L."/>
            <person name="Minx P."/>
            <person name="Mullikin J.C."/>
            <person name="Plumb R.W."/>
            <person name="Rogers J."/>
            <person name="Schein J.E."/>
            <person name="Sohrmann M."/>
            <person name="Spieth J."/>
            <person name="Stajich J.E."/>
            <person name="Wei C."/>
            <person name="Willey D."/>
            <person name="Wilson R.K."/>
            <person name="Durbin R.M."/>
            <person name="Waterston R.H."/>
        </authorList>
    </citation>
    <scope>NUCLEOTIDE SEQUENCE [LARGE SCALE GENOMIC DNA]</scope>
    <source>
        <strain>AF16</strain>
    </source>
</reference>
<evidence type="ECO:0000250" key="1"/>
<evidence type="ECO:0000250" key="2">
    <source>
        <dbReference type="UniProtKB" id="P54406"/>
    </source>
</evidence>
<evidence type="ECO:0000250" key="3">
    <source>
        <dbReference type="UniProtKB" id="P63212"/>
    </source>
</evidence>
<evidence type="ECO:0000305" key="4"/>
<proteinExistence type="inferred from homology"/>
<feature type="chain" id="PRO_0000042165" description="Guanine nucleotide-binding protein subunit gamma">
    <location>
        <begin position="1"/>
        <end position="59"/>
    </location>
</feature>
<feature type="propeptide" id="PRO_0000042166" description="Removed in mature form" evidence="1">
    <location>
        <begin position="60"/>
        <end position="62"/>
    </location>
</feature>
<feature type="modified residue" description="Cysteine methyl ester" evidence="1">
    <location>
        <position position="59"/>
    </location>
</feature>
<feature type="lipid moiety-binding region" description="S-geranylgeranyl cysteine" evidence="1">
    <location>
        <position position="59"/>
    </location>
</feature>